<feature type="chain" id="PRO_1000089958" description="Acetate kinase">
    <location>
        <begin position="1"/>
        <end position="397"/>
    </location>
</feature>
<feature type="active site" description="Proton donor/acceptor" evidence="1">
    <location>
        <position position="148"/>
    </location>
</feature>
<feature type="binding site" evidence="1">
    <location>
        <position position="7"/>
    </location>
    <ligand>
        <name>Mg(2+)</name>
        <dbReference type="ChEBI" id="CHEBI:18420"/>
    </ligand>
</feature>
<feature type="binding site" evidence="1">
    <location>
        <position position="14"/>
    </location>
    <ligand>
        <name>ATP</name>
        <dbReference type="ChEBI" id="CHEBI:30616"/>
    </ligand>
</feature>
<feature type="binding site" evidence="1">
    <location>
        <position position="91"/>
    </location>
    <ligand>
        <name>substrate</name>
    </ligand>
</feature>
<feature type="binding site" evidence="1">
    <location>
        <begin position="208"/>
        <end position="212"/>
    </location>
    <ligand>
        <name>ATP</name>
        <dbReference type="ChEBI" id="CHEBI:30616"/>
    </ligand>
</feature>
<feature type="binding site" evidence="1">
    <location>
        <begin position="283"/>
        <end position="285"/>
    </location>
    <ligand>
        <name>ATP</name>
        <dbReference type="ChEBI" id="CHEBI:30616"/>
    </ligand>
</feature>
<feature type="binding site" evidence="1">
    <location>
        <begin position="331"/>
        <end position="335"/>
    </location>
    <ligand>
        <name>ATP</name>
        <dbReference type="ChEBI" id="CHEBI:30616"/>
    </ligand>
</feature>
<feature type="binding site" evidence="1">
    <location>
        <position position="384"/>
    </location>
    <ligand>
        <name>Mg(2+)</name>
        <dbReference type="ChEBI" id="CHEBI:18420"/>
    </ligand>
</feature>
<feature type="site" description="Transition state stabilizer" evidence="1">
    <location>
        <position position="180"/>
    </location>
</feature>
<feature type="site" description="Transition state stabilizer" evidence="1">
    <location>
        <position position="241"/>
    </location>
</feature>
<organism>
    <name type="scientific">Azobacteroides pseudotrichonymphae genomovar. CFP2</name>
    <dbReference type="NCBI Taxonomy" id="511995"/>
    <lineage>
        <taxon>Bacteria</taxon>
        <taxon>Pseudomonadati</taxon>
        <taxon>Bacteroidota</taxon>
        <taxon>Bacteroidia</taxon>
        <taxon>Bacteroidales</taxon>
        <taxon>Candidatus Azobacteroides</taxon>
    </lineage>
</organism>
<sequence>MKILVLNCGSSSIKYKLFDMKAKSILAQGGVEKIGLTGSFLKLTLPNGKKVILEGEILEHRTGVEYILGVITSEKYGCIRSLSEIDAVGHRVVHGGEKFNSSVLIDDEVIRKITECIDLAPLHNPPNLNGIYAVVELMPSTPQVGVFDTAFHQTMPDFAYMYGLPYSLYEKYAIRRYGFHGTSHRYVSKRACEMLYMSYERQRIISCHIGNGASVTAIKNGISVDTSMGMTPVEGLLMGTRCGDIDAGILTYIMEKENIGTSAISTIINKCSGVLGTSGISSDMREIDDAIEIGNKKAILTSDIYTYKIKKYIGAYTVALEGIDILVFTGGVGENQFRIRQKICDGLEFIGIKIDEATNHIRGKETIISTTDSKVKVVVVPTDEEFMIALDTLSLLS</sequence>
<evidence type="ECO:0000255" key="1">
    <source>
        <dbReference type="HAMAP-Rule" id="MF_00020"/>
    </source>
</evidence>
<accession>B6YQE9</accession>
<proteinExistence type="inferred from homology"/>
<keyword id="KW-0067">ATP-binding</keyword>
<keyword id="KW-0963">Cytoplasm</keyword>
<keyword id="KW-0418">Kinase</keyword>
<keyword id="KW-0460">Magnesium</keyword>
<keyword id="KW-0479">Metal-binding</keyword>
<keyword id="KW-0547">Nucleotide-binding</keyword>
<keyword id="KW-1185">Reference proteome</keyword>
<keyword id="KW-0808">Transferase</keyword>
<name>ACKA_AZOPC</name>
<comment type="function">
    <text evidence="1">Catalyzes the formation of acetyl phosphate from acetate and ATP. Can also catalyze the reverse reaction.</text>
</comment>
<comment type="catalytic activity">
    <reaction evidence="1">
        <text>acetate + ATP = acetyl phosphate + ADP</text>
        <dbReference type="Rhea" id="RHEA:11352"/>
        <dbReference type="ChEBI" id="CHEBI:22191"/>
        <dbReference type="ChEBI" id="CHEBI:30089"/>
        <dbReference type="ChEBI" id="CHEBI:30616"/>
        <dbReference type="ChEBI" id="CHEBI:456216"/>
        <dbReference type="EC" id="2.7.2.1"/>
    </reaction>
</comment>
<comment type="cofactor">
    <cofactor evidence="1">
        <name>Mg(2+)</name>
        <dbReference type="ChEBI" id="CHEBI:18420"/>
    </cofactor>
    <cofactor evidence="1">
        <name>Mn(2+)</name>
        <dbReference type="ChEBI" id="CHEBI:29035"/>
    </cofactor>
    <text evidence="1">Mg(2+). Can also accept Mn(2+).</text>
</comment>
<comment type="pathway">
    <text evidence="1">Metabolic intermediate biosynthesis; acetyl-CoA biosynthesis; acetyl-CoA from acetate: step 1/2.</text>
</comment>
<comment type="subunit">
    <text evidence="1">Homodimer.</text>
</comment>
<comment type="subcellular location">
    <subcellularLocation>
        <location evidence="1">Cytoplasm</location>
    </subcellularLocation>
</comment>
<comment type="similarity">
    <text evidence="1">Belongs to the acetokinase family.</text>
</comment>
<gene>
    <name evidence="1" type="primary">ackA</name>
    <name type="ordered locus">CFPG_158</name>
</gene>
<dbReference type="EC" id="2.7.2.1" evidence="1"/>
<dbReference type="EMBL" id="AP010656">
    <property type="protein sequence ID" value="BAG83421.1"/>
    <property type="molecule type" value="Genomic_DNA"/>
</dbReference>
<dbReference type="RefSeq" id="WP_012573182.1">
    <property type="nucleotide sequence ID" value="NC_011565.1"/>
</dbReference>
<dbReference type="SMR" id="B6YQE9"/>
<dbReference type="STRING" id="511995.CFPG_158"/>
<dbReference type="KEGG" id="aps:CFPG_158"/>
<dbReference type="eggNOG" id="COG0282">
    <property type="taxonomic scope" value="Bacteria"/>
</dbReference>
<dbReference type="HOGENOM" id="CLU_020352_0_1_10"/>
<dbReference type="OrthoDB" id="9802453at2"/>
<dbReference type="UniPathway" id="UPA00340">
    <property type="reaction ID" value="UER00458"/>
</dbReference>
<dbReference type="Proteomes" id="UP000000723">
    <property type="component" value="Chromosome"/>
</dbReference>
<dbReference type="GO" id="GO:0005737">
    <property type="term" value="C:cytoplasm"/>
    <property type="evidence" value="ECO:0007669"/>
    <property type="project" value="UniProtKB-SubCell"/>
</dbReference>
<dbReference type="GO" id="GO:0008776">
    <property type="term" value="F:acetate kinase activity"/>
    <property type="evidence" value="ECO:0007669"/>
    <property type="project" value="UniProtKB-UniRule"/>
</dbReference>
<dbReference type="GO" id="GO:0005524">
    <property type="term" value="F:ATP binding"/>
    <property type="evidence" value="ECO:0007669"/>
    <property type="project" value="UniProtKB-KW"/>
</dbReference>
<dbReference type="GO" id="GO:0000287">
    <property type="term" value="F:magnesium ion binding"/>
    <property type="evidence" value="ECO:0007669"/>
    <property type="project" value="UniProtKB-UniRule"/>
</dbReference>
<dbReference type="GO" id="GO:0006083">
    <property type="term" value="P:acetate metabolic process"/>
    <property type="evidence" value="ECO:0007669"/>
    <property type="project" value="TreeGrafter"/>
</dbReference>
<dbReference type="GO" id="GO:0006085">
    <property type="term" value="P:acetyl-CoA biosynthetic process"/>
    <property type="evidence" value="ECO:0007669"/>
    <property type="project" value="UniProtKB-UniRule"/>
</dbReference>
<dbReference type="CDD" id="cd24010">
    <property type="entry name" value="ASKHA_NBD_AcK_PK"/>
    <property type="match status" value="1"/>
</dbReference>
<dbReference type="Gene3D" id="3.30.420.40">
    <property type="match status" value="2"/>
</dbReference>
<dbReference type="HAMAP" id="MF_00020">
    <property type="entry name" value="Acetate_kinase"/>
    <property type="match status" value="1"/>
</dbReference>
<dbReference type="InterPro" id="IPR004372">
    <property type="entry name" value="Ac/propionate_kinase"/>
</dbReference>
<dbReference type="InterPro" id="IPR000890">
    <property type="entry name" value="Aliphatic_acid_kin_short-chain"/>
</dbReference>
<dbReference type="InterPro" id="IPR023865">
    <property type="entry name" value="Aliphatic_acid_kinase_CS"/>
</dbReference>
<dbReference type="InterPro" id="IPR043129">
    <property type="entry name" value="ATPase_NBD"/>
</dbReference>
<dbReference type="NCBIfam" id="TIGR00016">
    <property type="entry name" value="ackA"/>
    <property type="match status" value="1"/>
</dbReference>
<dbReference type="PANTHER" id="PTHR21060">
    <property type="entry name" value="ACETATE KINASE"/>
    <property type="match status" value="1"/>
</dbReference>
<dbReference type="PANTHER" id="PTHR21060:SF15">
    <property type="entry name" value="ACETATE KINASE-RELATED"/>
    <property type="match status" value="1"/>
</dbReference>
<dbReference type="Pfam" id="PF00871">
    <property type="entry name" value="Acetate_kinase"/>
    <property type="match status" value="1"/>
</dbReference>
<dbReference type="PIRSF" id="PIRSF000722">
    <property type="entry name" value="Acetate_prop_kin"/>
    <property type="match status" value="1"/>
</dbReference>
<dbReference type="PRINTS" id="PR00471">
    <property type="entry name" value="ACETATEKNASE"/>
</dbReference>
<dbReference type="SUPFAM" id="SSF53067">
    <property type="entry name" value="Actin-like ATPase domain"/>
    <property type="match status" value="2"/>
</dbReference>
<dbReference type="PROSITE" id="PS01075">
    <property type="entry name" value="ACETATE_KINASE_1"/>
    <property type="match status" value="1"/>
</dbReference>
<dbReference type="PROSITE" id="PS01076">
    <property type="entry name" value="ACETATE_KINASE_2"/>
    <property type="match status" value="1"/>
</dbReference>
<protein>
    <recommendedName>
        <fullName evidence="1">Acetate kinase</fullName>
        <ecNumber evidence="1">2.7.2.1</ecNumber>
    </recommendedName>
    <alternativeName>
        <fullName evidence="1">Acetokinase</fullName>
    </alternativeName>
</protein>
<reference key="1">
    <citation type="journal article" date="2008" name="Science">
        <title>Genome of an endosymbiont coupling N2 fixation to cellulolysis within RT protist cells in termite gut.</title>
        <authorList>
            <person name="Hongoh Y."/>
            <person name="Sharma V.K."/>
            <person name="Prakash T."/>
            <person name="Noda S."/>
            <person name="Toh H."/>
            <person name="Taylor T.D."/>
            <person name="Kudo T."/>
            <person name="Sakaki Y."/>
            <person name="Toyoda A."/>
            <person name="Hattori M."/>
            <person name="Ohkuma M."/>
        </authorList>
    </citation>
    <scope>NUCLEOTIDE SEQUENCE [LARGE SCALE GENOMIC DNA]</scope>
</reference>